<feature type="chain" id="PRO_1000184440" description="ATP synthase subunit c">
    <location>
        <begin position="1"/>
        <end position="85"/>
    </location>
</feature>
<feature type="transmembrane region" description="Helical" evidence="1">
    <location>
        <begin position="10"/>
        <end position="30"/>
    </location>
</feature>
<feature type="transmembrane region" description="Helical" evidence="1">
    <location>
        <begin position="53"/>
        <end position="73"/>
    </location>
</feature>
<feature type="site" description="Reversibly protonated during proton transport" evidence="1">
    <location>
        <position position="60"/>
    </location>
</feature>
<comment type="function">
    <text evidence="1">F(1)F(0) ATP synthase produces ATP from ADP in the presence of a proton or sodium gradient. F-type ATPases consist of two structural domains, F(1) containing the extramembraneous catalytic core and F(0) containing the membrane proton channel, linked together by a central stalk and a peripheral stalk. During catalysis, ATP synthesis in the catalytic domain of F(1) is coupled via a rotary mechanism of the central stalk subunits to proton translocation.</text>
</comment>
<comment type="function">
    <text evidence="1">Key component of the F(0) channel; it plays a direct role in translocation across the membrane. A homomeric c-ring of between 10-14 subunits forms the central stalk rotor element with the F(1) delta and epsilon subunits.</text>
</comment>
<comment type="subunit">
    <text evidence="1">F-type ATPases have 2 components, F(1) - the catalytic core - and F(0) - the membrane proton channel. F(1) has five subunits: alpha(3), beta(3), gamma(1), delta(1), epsilon(1). F(0) has three main subunits: a(1), b(2) and c(10-14). The alpha and beta chains form an alternating ring which encloses part of the gamma chain. F(1) is attached to F(0) by a central stalk formed by the gamma and epsilon chains, while a peripheral stalk is formed by the delta and b chains.</text>
</comment>
<comment type="subcellular location">
    <subcellularLocation>
        <location evidence="1">Cell inner membrane</location>
        <topology evidence="1">Multi-pass membrane protein</topology>
    </subcellularLocation>
</comment>
<comment type="similarity">
    <text evidence="1">Belongs to the ATPase C chain family.</text>
</comment>
<sequence>METVVGLTAIAVALLIGLGALGTAIGFGLLGGKFLEGAARQPEMVPMLQVKMFIVAGLLDAVTMIGVGIALFFTFANPFVGQLAG</sequence>
<keyword id="KW-0066">ATP synthesis</keyword>
<keyword id="KW-0997">Cell inner membrane</keyword>
<keyword id="KW-1003">Cell membrane</keyword>
<keyword id="KW-0138">CF(0)</keyword>
<keyword id="KW-0375">Hydrogen ion transport</keyword>
<keyword id="KW-0406">Ion transport</keyword>
<keyword id="KW-0446">Lipid-binding</keyword>
<keyword id="KW-0472">Membrane</keyword>
<keyword id="KW-0812">Transmembrane</keyword>
<keyword id="KW-1133">Transmembrane helix</keyword>
<keyword id="KW-0813">Transport</keyword>
<evidence type="ECO:0000255" key="1">
    <source>
        <dbReference type="HAMAP-Rule" id="MF_01396"/>
    </source>
</evidence>
<dbReference type="EMBL" id="CP000076">
    <property type="protein sequence ID" value="AAY95409.1"/>
    <property type="molecule type" value="Genomic_DNA"/>
</dbReference>
<dbReference type="RefSeq" id="WP_002555987.1">
    <property type="nucleotide sequence ID" value="NC_004129.6"/>
</dbReference>
<dbReference type="SMR" id="Q4K3A4"/>
<dbReference type="STRING" id="220664.PFL_6221"/>
<dbReference type="GeneID" id="97918854"/>
<dbReference type="KEGG" id="pfl:PFL_6221"/>
<dbReference type="eggNOG" id="ENOG5032S3K">
    <property type="taxonomic scope" value="Bacteria"/>
</dbReference>
<dbReference type="HOGENOM" id="CLU_148047_1_0_6"/>
<dbReference type="Proteomes" id="UP000008540">
    <property type="component" value="Chromosome"/>
</dbReference>
<dbReference type="GO" id="GO:0005886">
    <property type="term" value="C:plasma membrane"/>
    <property type="evidence" value="ECO:0007669"/>
    <property type="project" value="UniProtKB-SubCell"/>
</dbReference>
<dbReference type="GO" id="GO:0045259">
    <property type="term" value="C:proton-transporting ATP synthase complex"/>
    <property type="evidence" value="ECO:0007669"/>
    <property type="project" value="UniProtKB-KW"/>
</dbReference>
<dbReference type="GO" id="GO:0033177">
    <property type="term" value="C:proton-transporting two-sector ATPase complex, proton-transporting domain"/>
    <property type="evidence" value="ECO:0007669"/>
    <property type="project" value="InterPro"/>
</dbReference>
<dbReference type="GO" id="GO:0008289">
    <property type="term" value="F:lipid binding"/>
    <property type="evidence" value="ECO:0007669"/>
    <property type="project" value="UniProtKB-KW"/>
</dbReference>
<dbReference type="GO" id="GO:0046933">
    <property type="term" value="F:proton-transporting ATP synthase activity, rotational mechanism"/>
    <property type="evidence" value="ECO:0007669"/>
    <property type="project" value="UniProtKB-UniRule"/>
</dbReference>
<dbReference type="CDD" id="cd18185">
    <property type="entry name" value="ATP-synt_Fo_c_ATPE"/>
    <property type="match status" value="1"/>
</dbReference>
<dbReference type="FunFam" id="1.20.20.10:FF:000002">
    <property type="entry name" value="ATP synthase subunit c"/>
    <property type="match status" value="1"/>
</dbReference>
<dbReference type="Gene3D" id="1.20.20.10">
    <property type="entry name" value="F1F0 ATP synthase subunit C"/>
    <property type="match status" value="1"/>
</dbReference>
<dbReference type="HAMAP" id="MF_01396">
    <property type="entry name" value="ATP_synth_c_bact"/>
    <property type="match status" value="1"/>
</dbReference>
<dbReference type="InterPro" id="IPR005953">
    <property type="entry name" value="ATP_synth_csu_bac/chlpt"/>
</dbReference>
<dbReference type="InterPro" id="IPR000454">
    <property type="entry name" value="ATP_synth_F0_csu"/>
</dbReference>
<dbReference type="InterPro" id="IPR020537">
    <property type="entry name" value="ATP_synth_F0_csu_DDCD_BS"/>
</dbReference>
<dbReference type="InterPro" id="IPR038662">
    <property type="entry name" value="ATP_synth_F0_csu_sf"/>
</dbReference>
<dbReference type="InterPro" id="IPR002379">
    <property type="entry name" value="ATPase_proteolipid_c-like_dom"/>
</dbReference>
<dbReference type="InterPro" id="IPR035921">
    <property type="entry name" value="F/V-ATP_Csub_sf"/>
</dbReference>
<dbReference type="NCBIfam" id="TIGR01260">
    <property type="entry name" value="ATP_synt_c"/>
    <property type="match status" value="1"/>
</dbReference>
<dbReference type="NCBIfam" id="NF005363">
    <property type="entry name" value="PRK06876.1"/>
    <property type="match status" value="1"/>
</dbReference>
<dbReference type="Pfam" id="PF00137">
    <property type="entry name" value="ATP-synt_C"/>
    <property type="match status" value="1"/>
</dbReference>
<dbReference type="PRINTS" id="PR00124">
    <property type="entry name" value="ATPASEC"/>
</dbReference>
<dbReference type="SUPFAM" id="SSF81333">
    <property type="entry name" value="F1F0 ATP synthase subunit C"/>
    <property type="match status" value="1"/>
</dbReference>
<dbReference type="PROSITE" id="PS00605">
    <property type="entry name" value="ATPASE_C"/>
    <property type="match status" value="1"/>
</dbReference>
<organism>
    <name type="scientific">Pseudomonas fluorescens (strain ATCC BAA-477 / NRRL B-23932 / Pf-5)</name>
    <dbReference type="NCBI Taxonomy" id="220664"/>
    <lineage>
        <taxon>Bacteria</taxon>
        <taxon>Pseudomonadati</taxon>
        <taxon>Pseudomonadota</taxon>
        <taxon>Gammaproteobacteria</taxon>
        <taxon>Pseudomonadales</taxon>
        <taxon>Pseudomonadaceae</taxon>
        <taxon>Pseudomonas</taxon>
    </lineage>
</organism>
<reference key="1">
    <citation type="journal article" date="2005" name="Nat. Biotechnol.">
        <title>Complete genome sequence of the plant commensal Pseudomonas fluorescens Pf-5.</title>
        <authorList>
            <person name="Paulsen I.T."/>
            <person name="Press C.M."/>
            <person name="Ravel J."/>
            <person name="Kobayashi D.Y."/>
            <person name="Myers G.S.A."/>
            <person name="Mavrodi D.V."/>
            <person name="DeBoy R.T."/>
            <person name="Seshadri R."/>
            <person name="Ren Q."/>
            <person name="Madupu R."/>
            <person name="Dodson R.J."/>
            <person name="Durkin A.S."/>
            <person name="Brinkac L.M."/>
            <person name="Daugherty S.C."/>
            <person name="Sullivan S.A."/>
            <person name="Rosovitz M.J."/>
            <person name="Gwinn M.L."/>
            <person name="Zhou L."/>
            <person name="Schneider D.J."/>
            <person name="Cartinhour S.W."/>
            <person name="Nelson W.C."/>
            <person name="Weidman J."/>
            <person name="Watkins K."/>
            <person name="Tran K."/>
            <person name="Khouri H."/>
            <person name="Pierson E.A."/>
            <person name="Pierson L.S. III"/>
            <person name="Thomashow L.S."/>
            <person name="Loper J.E."/>
        </authorList>
    </citation>
    <scope>NUCLEOTIDE SEQUENCE [LARGE SCALE GENOMIC DNA]</scope>
    <source>
        <strain>ATCC BAA-477 / NRRL B-23932 / Pf-5</strain>
    </source>
</reference>
<name>ATPL_PSEF5</name>
<gene>
    <name evidence="1" type="primary">atpE</name>
    <name type="ordered locus">PFL_6221</name>
</gene>
<accession>Q4K3A4</accession>
<proteinExistence type="inferred from homology"/>
<protein>
    <recommendedName>
        <fullName evidence="1">ATP synthase subunit c</fullName>
    </recommendedName>
    <alternativeName>
        <fullName evidence="1">ATP synthase F(0) sector subunit c</fullName>
    </alternativeName>
    <alternativeName>
        <fullName evidence="1">F-type ATPase subunit c</fullName>
        <shortName evidence="1">F-ATPase subunit c</shortName>
    </alternativeName>
    <alternativeName>
        <fullName evidence="1">Lipid-binding protein</fullName>
    </alternativeName>
</protein>